<comment type="function">
    <text evidence="1">Catalyzes the condensation of carbamoyl phosphate and aspartate to form carbamoyl aspartate and inorganic phosphate, the committed step in the de novo pyrimidine nucleotide biosynthesis pathway.</text>
</comment>
<comment type="catalytic activity">
    <reaction evidence="1">
        <text>carbamoyl phosphate + L-aspartate = N-carbamoyl-L-aspartate + phosphate + H(+)</text>
        <dbReference type="Rhea" id="RHEA:20013"/>
        <dbReference type="ChEBI" id="CHEBI:15378"/>
        <dbReference type="ChEBI" id="CHEBI:29991"/>
        <dbReference type="ChEBI" id="CHEBI:32814"/>
        <dbReference type="ChEBI" id="CHEBI:43474"/>
        <dbReference type="ChEBI" id="CHEBI:58228"/>
        <dbReference type="EC" id="2.1.3.2"/>
    </reaction>
</comment>
<comment type="pathway">
    <text evidence="1">Pyrimidine metabolism; UMP biosynthesis via de novo pathway; (S)-dihydroorotate from bicarbonate: step 2/3.</text>
</comment>
<comment type="subunit">
    <text evidence="1">Heterododecamer (2C3:3R2) of six catalytic PyrB chains organized as two trimers (C3), and six regulatory PyrI chains organized as three dimers (R2).</text>
</comment>
<comment type="similarity">
    <text evidence="1">Belongs to the aspartate/ornithine carbamoyltransferase superfamily. ATCase family.</text>
</comment>
<proteinExistence type="inferred from homology"/>
<organism>
    <name type="scientific">Brucella abortus (strain S19)</name>
    <dbReference type="NCBI Taxonomy" id="430066"/>
    <lineage>
        <taxon>Bacteria</taxon>
        <taxon>Pseudomonadati</taxon>
        <taxon>Pseudomonadota</taxon>
        <taxon>Alphaproteobacteria</taxon>
        <taxon>Hyphomicrobiales</taxon>
        <taxon>Brucellaceae</taxon>
        <taxon>Brucella/Ochrobactrum group</taxon>
        <taxon>Brucella</taxon>
    </lineage>
</organism>
<name>PYRB_BRUA1</name>
<keyword id="KW-0665">Pyrimidine biosynthesis</keyword>
<keyword id="KW-0808">Transferase</keyword>
<feature type="chain" id="PRO_1000088740" description="Aspartate carbamoyltransferase catalytic subunit">
    <location>
        <begin position="1"/>
        <end position="322"/>
    </location>
</feature>
<feature type="binding site" evidence="1">
    <location>
        <position position="65"/>
    </location>
    <ligand>
        <name>carbamoyl phosphate</name>
        <dbReference type="ChEBI" id="CHEBI:58228"/>
    </ligand>
</feature>
<feature type="binding site" evidence="1">
    <location>
        <position position="66"/>
    </location>
    <ligand>
        <name>carbamoyl phosphate</name>
        <dbReference type="ChEBI" id="CHEBI:58228"/>
    </ligand>
</feature>
<feature type="binding site" evidence="1">
    <location>
        <position position="93"/>
    </location>
    <ligand>
        <name>L-aspartate</name>
        <dbReference type="ChEBI" id="CHEBI:29991"/>
    </ligand>
</feature>
<feature type="binding site" evidence="1">
    <location>
        <position position="115"/>
    </location>
    <ligand>
        <name>carbamoyl phosphate</name>
        <dbReference type="ChEBI" id="CHEBI:58228"/>
    </ligand>
</feature>
<feature type="binding site" evidence="1">
    <location>
        <position position="143"/>
    </location>
    <ligand>
        <name>carbamoyl phosphate</name>
        <dbReference type="ChEBI" id="CHEBI:58228"/>
    </ligand>
</feature>
<feature type="binding site" evidence="1">
    <location>
        <position position="146"/>
    </location>
    <ligand>
        <name>carbamoyl phosphate</name>
        <dbReference type="ChEBI" id="CHEBI:58228"/>
    </ligand>
</feature>
<feature type="binding site" evidence="1">
    <location>
        <position position="176"/>
    </location>
    <ligand>
        <name>L-aspartate</name>
        <dbReference type="ChEBI" id="CHEBI:29991"/>
    </ligand>
</feature>
<feature type="binding site" evidence="1">
    <location>
        <position position="230"/>
    </location>
    <ligand>
        <name>L-aspartate</name>
        <dbReference type="ChEBI" id="CHEBI:29991"/>
    </ligand>
</feature>
<feature type="binding site" evidence="1">
    <location>
        <position position="271"/>
    </location>
    <ligand>
        <name>carbamoyl phosphate</name>
        <dbReference type="ChEBI" id="CHEBI:58228"/>
    </ligand>
</feature>
<feature type="binding site" evidence="1">
    <location>
        <position position="272"/>
    </location>
    <ligand>
        <name>carbamoyl phosphate</name>
        <dbReference type="ChEBI" id="CHEBI:58228"/>
    </ligand>
</feature>
<dbReference type="EC" id="2.1.3.2" evidence="1"/>
<dbReference type="EMBL" id="CP000888">
    <property type="protein sequence ID" value="ACD74094.1"/>
    <property type="molecule type" value="Genomic_DNA"/>
</dbReference>
<dbReference type="RefSeq" id="WP_002966034.1">
    <property type="nucleotide sequence ID" value="NC_010740.1"/>
</dbReference>
<dbReference type="SMR" id="B2SB57"/>
<dbReference type="KEGG" id="bmc:BAbS19_II05990"/>
<dbReference type="HOGENOM" id="CLU_043846_2_0_5"/>
<dbReference type="UniPathway" id="UPA00070">
    <property type="reaction ID" value="UER00116"/>
</dbReference>
<dbReference type="Proteomes" id="UP000002565">
    <property type="component" value="Chromosome 2"/>
</dbReference>
<dbReference type="GO" id="GO:0005829">
    <property type="term" value="C:cytosol"/>
    <property type="evidence" value="ECO:0007669"/>
    <property type="project" value="TreeGrafter"/>
</dbReference>
<dbReference type="GO" id="GO:0016597">
    <property type="term" value="F:amino acid binding"/>
    <property type="evidence" value="ECO:0007669"/>
    <property type="project" value="InterPro"/>
</dbReference>
<dbReference type="GO" id="GO:0004070">
    <property type="term" value="F:aspartate carbamoyltransferase activity"/>
    <property type="evidence" value="ECO:0007669"/>
    <property type="project" value="UniProtKB-UniRule"/>
</dbReference>
<dbReference type="GO" id="GO:0006207">
    <property type="term" value="P:'de novo' pyrimidine nucleobase biosynthetic process"/>
    <property type="evidence" value="ECO:0007669"/>
    <property type="project" value="InterPro"/>
</dbReference>
<dbReference type="GO" id="GO:0044205">
    <property type="term" value="P:'de novo' UMP biosynthetic process"/>
    <property type="evidence" value="ECO:0007669"/>
    <property type="project" value="UniProtKB-UniRule"/>
</dbReference>
<dbReference type="GO" id="GO:0006520">
    <property type="term" value="P:amino acid metabolic process"/>
    <property type="evidence" value="ECO:0007669"/>
    <property type="project" value="InterPro"/>
</dbReference>
<dbReference type="FunFam" id="3.40.50.1370:FF:000007">
    <property type="entry name" value="Aspartate carbamoyltransferase"/>
    <property type="match status" value="1"/>
</dbReference>
<dbReference type="Gene3D" id="3.40.50.1370">
    <property type="entry name" value="Aspartate/ornithine carbamoyltransferase"/>
    <property type="match status" value="2"/>
</dbReference>
<dbReference type="HAMAP" id="MF_00001">
    <property type="entry name" value="Asp_carb_tr"/>
    <property type="match status" value="1"/>
</dbReference>
<dbReference type="InterPro" id="IPR006132">
    <property type="entry name" value="Asp/Orn_carbamoyltranf_P-bd"/>
</dbReference>
<dbReference type="InterPro" id="IPR006130">
    <property type="entry name" value="Asp/Orn_carbamoylTrfase"/>
</dbReference>
<dbReference type="InterPro" id="IPR036901">
    <property type="entry name" value="Asp/Orn_carbamoylTrfase_sf"/>
</dbReference>
<dbReference type="InterPro" id="IPR002082">
    <property type="entry name" value="Asp_carbamoyltransf"/>
</dbReference>
<dbReference type="InterPro" id="IPR006131">
    <property type="entry name" value="Asp_carbamoyltransf_Asp/Orn-bd"/>
</dbReference>
<dbReference type="NCBIfam" id="TIGR00670">
    <property type="entry name" value="asp_carb_tr"/>
    <property type="match status" value="1"/>
</dbReference>
<dbReference type="NCBIfam" id="NF002032">
    <property type="entry name" value="PRK00856.1"/>
    <property type="match status" value="1"/>
</dbReference>
<dbReference type="PANTHER" id="PTHR45753:SF6">
    <property type="entry name" value="ASPARTATE CARBAMOYLTRANSFERASE"/>
    <property type="match status" value="1"/>
</dbReference>
<dbReference type="PANTHER" id="PTHR45753">
    <property type="entry name" value="ORNITHINE CARBAMOYLTRANSFERASE, MITOCHONDRIAL"/>
    <property type="match status" value="1"/>
</dbReference>
<dbReference type="Pfam" id="PF00185">
    <property type="entry name" value="OTCace"/>
    <property type="match status" value="1"/>
</dbReference>
<dbReference type="Pfam" id="PF02729">
    <property type="entry name" value="OTCace_N"/>
    <property type="match status" value="1"/>
</dbReference>
<dbReference type="PRINTS" id="PR00100">
    <property type="entry name" value="AOTCASE"/>
</dbReference>
<dbReference type="PRINTS" id="PR00101">
    <property type="entry name" value="ATCASE"/>
</dbReference>
<dbReference type="SUPFAM" id="SSF53671">
    <property type="entry name" value="Aspartate/ornithine carbamoyltransferase"/>
    <property type="match status" value="1"/>
</dbReference>
<dbReference type="PROSITE" id="PS00097">
    <property type="entry name" value="CARBAMOYLTRANSFERASE"/>
    <property type="match status" value="1"/>
</dbReference>
<accession>B2SB57</accession>
<sequence length="322" mass="34802">MTNQTVSPLFPHRHLLGIKGLSPLDILCLLDLADQEIAVSRQPEKKKSVLRGRTQINLFFEASTRTQSSFELAGKRLGADVMNMSVGNSSVKKGETLIDTAMTLNAMQPDILVIRHASAGAAALLAQKVGCSVVNAGDGAHEHPTQALLDALTIRRAKGQIENLIVAICGDVLHSRVARSNILLLNALGARVRVVAPSTLLPAGMADMSVEVFNSMEEGLKDADVVMMLRLQRERMAGSFVPSVREYFHFYGLDREKLKFAKPDALVMHPGPMNRGVEIASDVADGPQSVIQQQVEMGVAVRMAVMEALLDPRRNPGNGEPA</sequence>
<protein>
    <recommendedName>
        <fullName evidence="1">Aspartate carbamoyltransferase catalytic subunit</fullName>
        <ecNumber evidence="1">2.1.3.2</ecNumber>
    </recommendedName>
    <alternativeName>
        <fullName evidence="1">Aspartate transcarbamylase</fullName>
        <shortName evidence="1">ATCase</shortName>
    </alternativeName>
</protein>
<reference key="1">
    <citation type="journal article" date="2008" name="PLoS ONE">
        <title>Genome sequence of Brucella abortus vaccine strain S19 compared to virulent strains yields candidate virulence genes.</title>
        <authorList>
            <person name="Crasta O.R."/>
            <person name="Folkerts O."/>
            <person name="Fei Z."/>
            <person name="Mane S.P."/>
            <person name="Evans C."/>
            <person name="Martino-Catt S."/>
            <person name="Bricker B."/>
            <person name="Yu G."/>
            <person name="Du L."/>
            <person name="Sobral B.W."/>
        </authorList>
    </citation>
    <scope>NUCLEOTIDE SEQUENCE [LARGE SCALE GENOMIC DNA]</scope>
    <source>
        <strain>S19</strain>
    </source>
</reference>
<gene>
    <name evidence="1" type="primary">pyrB</name>
    <name type="ordered locus">BAbS19_II05990</name>
</gene>
<evidence type="ECO:0000255" key="1">
    <source>
        <dbReference type="HAMAP-Rule" id="MF_00001"/>
    </source>
</evidence>